<reference key="1">
    <citation type="journal article" date="2007" name="Theor. Appl. Genet.">
        <title>Complete chloroplast genome sequences of Hordeum vulgare, Sorghum bicolor and Agrostis stolonifera, and comparative analyses with other grass genomes.</title>
        <authorList>
            <person name="Saski C."/>
            <person name="Lee S.-B."/>
            <person name="Fjellheim S."/>
            <person name="Guda C."/>
            <person name="Jansen R.K."/>
            <person name="Luo H."/>
            <person name="Tomkins J."/>
            <person name="Rognli O.A."/>
            <person name="Daniell H."/>
            <person name="Clarke J.L."/>
        </authorList>
    </citation>
    <scope>NUCLEOTIDE SEQUENCE [LARGE SCALE GENOMIC DNA]</scope>
    <source>
        <strain>cv. BTx623</strain>
    </source>
</reference>
<name>CLPP_SORBI</name>
<evidence type="ECO:0000255" key="1">
    <source>
        <dbReference type="HAMAP-Rule" id="MF_00444"/>
    </source>
</evidence>
<comment type="function">
    <text evidence="1">Cleaves peptides in various proteins in a process that requires ATP hydrolysis. Has a chymotrypsin-like activity. Plays a major role in the degradation of misfolded proteins.</text>
</comment>
<comment type="catalytic activity">
    <reaction evidence="1">
        <text>Hydrolysis of proteins to small peptides in the presence of ATP and magnesium. alpha-casein is the usual test substrate. In the absence of ATP, only oligopeptides shorter than five residues are hydrolyzed (such as succinyl-Leu-Tyr-|-NHMec, and Leu-Tyr-Leu-|-Tyr-Trp, in which cleavage of the -Tyr-|-Leu- and -Tyr-|-Trp bonds also occurs).</text>
        <dbReference type="EC" id="3.4.21.92"/>
    </reaction>
</comment>
<comment type="subunit">
    <text>Component of the chloroplastic Clp protease core complex.</text>
</comment>
<comment type="subcellular location">
    <subcellularLocation>
        <location evidence="1">Plastid</location>
        <location evidence="1">Chloroplast stroma</location>
    </subcellularLocation>
</comment>
<comment type="similarity">
    <text evidence="1">Belongs to the peptidase S14 family.</text>
</comment>
<geneLocation type="chloroplast"/>
<feature type="chain" id="PRO_0000275304" description="ATP-dependent Clp protease proteolytic subunit">
    <location>
        <begin position="1"/>
        <end position="216"/>
    </location>
</feature>
<feature type="active site" description="Nucleophile" evidence="1">
    <location>
        <position position="101"/>
    </location>
</feature>
<feature type="active site" evidence="1">
    <location>
        <position position="126"/>
    </location>
</feature>
<gene>
    <name evidence="1" type="primary">clpP</name>
</gene>
<proteinExistence type="inferred from homology"/>
<accession>A1E9U9</accession>
<dbReference type="EC" id="3.4.21.92" evidence="1"/>
<dbReference type="EMBL" id="EF115542">
    <property type="protein sequence ID" value="ABK79520.1"/>
    <property type="molecule type" value="Genomic_DNA"/>
</dbReference>
<dbReference type="RefSeq" id="YP_899432.1">
    <property type="nucleotide sequence ID" value="NC_008602.1"/>
</dbReference>
<dbReference type="SMR" id="A1E9U9"/>
<dbReference type="FunCoup" id="A1E9U9">
    <property type="interactions" value="9"/>
</dbReference>
<dbReference type="STRING" id="4558.A1E9U9"/>
<dbReference type="MEROPS" id="S14.002"/>
<dbReference type="GeneID" id="4549216"/>
<dbReference type="KEGG" id="sbi:4549216"/>
<dbReference type="InParanoid" id="A1E9U9"/>
<dbReference type="OrthoDB" id="1875263at2759"/>
<dbReference type="Proteomes" id="UP000000768">
    <property type="component" value="Chloroplast"/>
</dbReference>
<dbReference type="ExpressionAtlas" id="A1E9U9">
    <property type="expression patterns" value="baseline and differential"/>
</dbReference>
<dbReference type="GO" id="GO:0009570">
    <property type="term" value="C:chloroplast stroma"/>
    <property type="evidence" value="ECO:0007669"/>
    <property type="project" value="UniProtKB-SubCell"/>
</dbReference>
<dbReference type="GO" id="GO:0009368">
    <property type="term" value="C:endopeptidase Clp complex"/>
    <property type="evidence" value="ECO:0000318"/>
    <property type="project" value="GO_Central"/>
</dbReference>
<dbReference type="GO" id="GO:0004176">
    <property type="term" value="F:ATP-dependent peptidase activity"/>
    <property type="evidence" value="ECO:0000318"/>
    <property type="project" value="GO_Central"/>
</dbReference>
<dbReference type="GO" id="GO:0051117">
    <property type="term" value="F:ATPase binding"/>
    <property type="evidence" value="ECO:0000318"/>
    <property type="project" value="GO_Central"/>
</dbReference>
<dbReference type="GO" id="GO:0004252">
    <property type="term" value="F:serine-type endopeptidase activity"/>
    <property type="evidence" value="ECO:0000318"/>
    <property type="project" value="GO_Central"/>
</dbReference>
<dbReference type="GO" id="GO:0006515">
    <property type="term" value="P:protein quality control for misfolded or incompletely synthesized proteins"/>
    <property type="evidence" value="ECO:0000318"/>
    <property type="project" value="GO_Central"/>
</dbReference>
<dbReference type="CDD" id="cd07017">
    <property type="entry name" value="S14_ClpP_2"/>
    <property type="match status" value="1"/>
</dbReference>
<dbReference type="FunFam" id="3.90.226.10:FF:000006">
    <property type="entry name" value="ATP-dependent Clp protease proteolytic subunit"/>
    <property type="match status" value="1"/>
</dbReference>
<dbReference type="Gene3D" id="3.90.226.10">
    <property type="entry name" value="2-enoyl-CoA Hydratase, Chain A, domain 1"/>
    <property type="match status" value="1"/>
</dbReference>
<dbReference type="HAMAP" id="MF_00444">
    <property type="entry name" value="ClpP"/>
    <property type="match status" value="1"/>
</dbReference>
<dbReference type="InterPro" id="IPR001907">
    <property type="entry name" value="ClpP"/>
</dbReference>
<dbReference type="InterPro" id="IPR029045">
    <property type="entry name" value="ClpP/crotonase-like_dom_sf"/>
</dbReference>
<dbReference type="InterPro" id="IPR023562">
    <property type="entry name" value="ClpP/TepA"/>
</dbReference>
<dbReference type="InterPro" id="IPR033135">
    <property type="entry name" value="ClpP_His_AS"/>
</dbReference>
<dbReference type="InterPro" id="IPR018215">
    <property type="entry name" value="ClpP_Ser_AS"/>
</dbReference>
<dbReference type="PANTHER" id="PTHR48481">
    <property type="entry name" value="ATP-DEPENDENT CLP PROTEASE PROTEOLYTIC SUBUNIT"/>
    <property type="match status" value="1"/>
</dbReference>
<dbReference type="PANTHER" id="PTHR48481:SF1">
    <property type="entry name" value="ATP-DEPENDENT CLP PROTEASE PROTEOLYTIC SUBUNIT"/>
    <property type="match status" value="1"/>
</dbReference>
<dbReference type="Pfam" id="PF00574">
    <property type="entry name" value="CLP_protease"/>
    <property type="match status" value="1"/>
</dbReference>
<dbReference type="PRINTS" id="PR00127">
    <property type="entry name" value="CLPPROTEASEP"/>
</dbReference>
<dbReference type="SUPFAM" id="SSF52096">
    <property type="entry name" value="ClpP/crotonase"/>
    <property type="match status" value="1"/>
</dbReference>
<dbReference type="PROSITE" id="PS00382">
    <property type="entry name" value="CLP_PROTEASE_HIS"/>
    <property type="match status" value="1"/>
</dbReference>
<dbReference type="PROSITE" id="PS00381">
    <property type="entry name" value="CLP_PROTEASE_SER"/>
    <property type="match status" value="1"/>
</dbReference>
<keyword id="KW-0150">Chloroplast</keyword>
<keyword id="KW-0378">Hydrolase</keyword>
<keyword id="KW-0934">Plastid</keyword>
<keyword id="KW-0645">Protease</keyword>
<keyword id="KW-1185">Reference proteome</keyword>
<keyword id="KW-0720">Serine protease</keyword>
<organism>
    <name type="scientific">Sorghum bicolor</name>
    <name type="common">Sorghum</name>
    <name type="synonym">Sorghum vulgare</name>
    <dbReference type="NCBI Taxonomy" id="4558"/>
    <lineage>
        <taxon>Eukaryota</taxon>
        <taxon>Viridiplantae</taxon>
        <taxon>Streptophyta</taxon>
        <taxon>Embryophyta</taxon>
        <taxon>Tracheophyta</taxon>
        <taxon>Spermatophyta</taxon>
        <taxon>Magnoliopsida</taxon>
        <taxon>Liliopsida</taxon>
        <taxon>Poales</taxon>
        <taxon>Poaceae</taxon>
        <taxon>PACMAD clade</taxon>
        <taxon>Panicoideae</taxon>
        <taxon>Andropogonodae</taxon>
        <taxon>Andropogoneae</taxon>
        <taxon>Sorghinae</taxon>
        <taxon>Sorghum</taxon>
    </lineage>
</organism>
<protein>
    <recommendedName>
        <fullName evidence="1">ATP-dependent Clp protease proteolytic subunit</fullName>
        <ecNumber evidence="1">3.4.21.92</ecNumber>
    </recommendedName>
    <alternativeName>
        <fullName evidence="1">Endopeptidase Clp</fullName>
    </alternativeName>
</protein>
<sequence length="216" mass="24743">MPIGVPKVPYRIPGDEEATWVDLYNVMYRERTLFLGQEIRCEITNHITGLMVYLSIEDGNSDIFLFINSPGGWLISGMAIFDTMQTVTPDIYTICLGIAASMASFILLGGEPTKRIAFPHARIMLHQPASAYYRARTPEFLLEVEELHKVREMITRVYALRTGKPFWVVSEDMERDVFMSADEAKAYGLVDIVGDEMIDEHCDTDPVWFPEMFKDW</sequence>